<comment type="function">
    <text evidence="5 6 7 9">Component of a multiprotein complex equivalent of the SWI/SNF complex, an ATP-dependent chromatin-remodeling complex, which is required for the positive and negative regulation of gene expression of a large number of genes. It changes chromatin structure by altering DNA-histone contacts within a nucleosome, leading eventually to a change in nucleosome position, thus facilitating or repressing binding of gene-specific transcription factors. May play an essential role in the transition from the vegetative to the reproductive phase of development. May be a positive regulator of ABA signaling.</text>
</comment>
<comment type="subunit">
    <text evidence="5 7 8 9 10">Homodimers and heterodimers. Interacts with SWI3A, SWI3C, SWI3D, BSH, BRM and FCA (via C-terminus), and (via N-terminus) with HAB1. Interacts with MORC6 and SUVH9 (PubMed:27171427).</text>
</comment>
<comment type="interaction">
    <interactant intactId="EBI-1102271">
        <id>Q84JG2</id>
    </interactant>
    <interactant intactId="EBI-537680">
        <id>O04719</id>
        <label>ABI2</label>
    </interactant>
    <organismsDiffer>false</organismsDiffer>
    <experiments>2</experiments>
</comment>
<comment type="interaction">
    <interactant intactId="EBI-1102271">
        <id>Q84JG2</id>
    </interactant>
    <interactant intactId="EBI-15191723">
        <id>Q9ASZ1</id>
        <label>GEBP</label>
    </interactant>
    <organismsDiffer>false</organismsDiffer>
    <experiments>3</experiments>
</comment>
<comment type="interaction">
    <interactant intactId="EBI-1102271">
        <id>Q84JG2</id>
    </interactant>
    <interactant intactId="EBI-4426914">
        <id>Q8VYD2</id>
        <label>GPL1</label>
    </interactant>
    <organismsDiffer>false</organismsDiffer>
    <experiments>3</experiments>
</comment>
<comment type="interaction">
    <interactant intactId="EBI-1102271">
        <id>Q84JG2</id>
    </interactant>
    <interactant intactId="EBI-2309302">
        <id>Q9CAJ0</id>
        <label>HAB1</label>
    </interactant>
    <organismsDiffer>false</organismsDiffer>
    <experiments>4</experiments>
</comment>
<comment type="interaction">
    <interactant intactId="EBI-1102271">
        <id>Q84JG2</id>
    </interactant>
    <interactant intactId="EBI-530486">
        <id>P46639</id>
        <label>KNAT1</label>
    </interactant>
    <organismsDiffer>false</organismsDiffer>
    <experiments>6</experiments>
</comment>
<comment type="interaction">
    <interactant intactId="EBI-1102271">
        <id>Q84JG2</id>
    </interactant>
    <interactant intactId="EBI-1102300">
        <id>Q9XI07</id>
        <label>SWI3C</label>
    </interactant>
    <organismsDiffer>false</organismsDiffer>
    <experiments>4</experiments>
</comment>
<comment type="subcellular location">
    <subcellularLocation>
        <location evidence="3 7 9">Nucleus</location>
    </subcellularLocation>
</comment>
<comment type="tissue specificity">
    <text evidence="6 7">Expressed in roots, stems, leaves, flowers and siliques.</text>
</comment>
<comment type="disruption phenotype">
    <text evidence="7">Plants have pleiotropic developmental abnormalities including embryo development blocked at the early globular stage.</text>
</comment>
<comment type="sequence caution" evidence="11">
    <conflict type="erroneous gene model prediction">
        <sequence resource="EMBL-CDS" id="AAB80676"/>
    </conflict>
</comment>
<accession>Q84JG2</accession>
<accession>O22811</accession>
<evidence type="ECO:0000255" key="1"/>
<evidence type="ECO:0000255" key="2">
    <source>
        <dbReference type="PROSITE-ProRule" id="PRU00247"/>
    </source>
</evidence>
<evidence type="ECO:0000255" key="3">
    <source>
        <dbReference type="PROSITE-ProRule" id="PRU00624"/>
    </source>
</evidence>
<evidence type="ECO:0000256" key="4">
    <source>
        <dbReference type="SAM" id="MobiDB-lite"/>
    </source>
</evidence>
<evidence type="ECO:0000269" key="5">
    <source>
    </source>
</evidence>
<evidence type="ECO:0000269" key="6">
    <source>
    </source>
</evidence>
<evidence type="ECO:0000269" key="7">
    <source>
    </source>
</evidence>
<evidence type="ECO:0000269" key="8">
    <source>
    </source>
</evidence>
<evidence type="ECO:0000269" key="9">
    <source>
    </source>
</evidence>
<evidence type="ECO:0000269" key="10">
    <source>
    </source>
</evidence>
<evidence type="ECO:0000305" key="11"/>
<protein>
    <recommendedName>
        <fullName>SWI/SNF complex subunit SWI3B</fullName>
        <shortName>AtSWI3B</shortName>
    </recommendedName>
    <alternativeName>
        <fullName>Transcription regulatory protein SWI3B</fullName>
    </alternativeName>
</protein>
<reference key="1">
    <citation type="journal article" date="2005" name="Plant Cell">
        <title>SWI3 subunits of putative SWI/SNF chromatin-remodeling complexes play distinct roles during Arabidopsis development.</title>
        <authorList>
            <person name="Sarnowski T.J."/>
            <person name="Rios G."/>
            <person name="Jasik J."/>
            <person name="Swiezewski S."/>
            <person name="Kaczanowski S."/>
            <person name="Li Y."/>
            <person name="Kwiatkowska A."/>
            <person name="Pawlikowska K."/>
            <person name="Kozbial M."/>
            <person name="Kozbial P."/>
            <person name="Koncz C."/>
            <person name="Jerzmanowski A."/>
        </authorList>
    </citation>
    <scope>NUCLEOTIDE SEQUENCE [MRNA]</scope>
    <scope>FUNCTION</scope>
    <scope>DISRUPTION PHENOTYPE</scope>
    <scope>TISSUE SPECIFICITY</scope>
    <scope>SUBCELLULAR LOCATION</scope>
    <scope>INTERACTION WITH SWI3A; SWI3C; SWI3D; BSH AND FCA</scope>
    <scope>SUBUNIT</scope>
</reference>
<reference key="2">
    <citation type="journal article" date="1999" name="Nature">
        <title>Sequence and analysis of chromosome 2 of the plant Arabidopsis thaliana.</title>
        <authorList>
            <person name="Lin X."/>
            <person name="Kaul S."/>
            <person name="Rounsley S.D."/>
            <person name="Shea T.P."/>
            <person name="Benito M.-I."/>
            <person name="Town C.D."/>
            <person name="Fujii C.Y."/>
            <person name="Mason T.M."/>
            <person name="Bowman C.L."/>
            <person name="Barnstead M.E."/>
            <person name="Feldblyum T.V."/>
            <person name="Buell C.R."/>
            <person name="Ketchum K.A."/>
            <person name="Lee J.J."/>
            <person name="Ronning C.M."/>
            <person name="Koo H.L."/>
            <person name="Moffat K.S."/>
            <person name="Cronin L.A."/>
            <person name="Shen M."/>
            <person name="Pai G."/>
            <person name="Van Aken S."/>
            <person name="Umayam L."/>
            <person name="Tallon L.J."/>
            <person name="Gill J.E."/>
            <person name="Adams M.D."/>
            <person name="Carrera A.J."/>
            <person name="Creasy T.H."/>
            <person name="Goodman H.M."/>
            <person name="Somerville C.R."/>
            <person name="Copenhaver G.P."/>
            <person name="Preuss D."/>
            <person name="Nierman W.C."/>
            <person name="White O."/>
            <person name="Eisen J.A."/>
            <person name="Salzberg S.L."/>
            <person name="Fraser C.M."/>
            <person name="Venter J.C."/>
        </authorList>
    </citation>
    <scope>NUCLEOTIDE SEQUENCE [LARGE SCALE GENOMIC DNA]</scope>
    <source>
        <strain>cv. Columbia</strain>
    </source>
</reference>
<reference key="3">
    <citation type="journal article" date="2017" name="Plant J.">
        <title>Araport11: a complete reannotation of the Arabidopsis thaliana reference genome.</title>
        <authorList>
            <person name="Cheng C.Y."/>
            <person name="Krishnakumar V."/>
            <person name="Chan A.P."/>
            <person name="Thibaud-Nissen F."/>
            <person name="Schobel S."/>
            <person name="Town C.D."/>
        </authorList>
    </citation>
    <scope>GENOME REANNOTATION</scope>
    <source>
        <strain>cv. Columbia</strain>
    </source>
</reference>
<reference key="4">
    <citation type="journal article" date="2003" name="Science">
        <title>Empirical analysis of transcriptional activity in the Arabidopsis genome.</title>
        <authorList>
            <person name="Yamada K."/>
            <person name="Lim J."/>
            <person name="Dale J.M."/>
            <person name="Chen H."/>
            <person name="Shinn P."/>
            <person name="Palm C.J."/>
            <person name="Southwick A.M."/>
            <person name="Wu H.C."/>
            <person name="Kim C.J."/>
            <person name="Nguyen M."/>
            <person name="Pham P.K."/>
            <person name="Cheuk R.F."/>
            <person name="Karlin-Newmann G."/>
            <person name="Liu S.X."/>
            <person name="Lam B."/>
            <person name="Sakano H."/>
            <person name="Wu T."/>
            <person name="Yu G."/>
            <person name="Miranda M."/>
            <person name="Quach H.L."/>
            <person name="Tripp M."/>
            <person name="Chang C.H."/>
            <person name="Lee J.M."/>
            <person name="Toriumi M.J."/>
            <person name="Chan M.M."/>
            <person name="Tang C.C."/>
            <person name="Onodera C.S."/>
            <person name="Deng J.M."/>
            <person name="Akiyama K."/>
            <person name="Ansari Y."/>
            <person name="Arakawa T."/>
            <person name="Banh J."/>
            <person name="Banno F."/>
            <person name="Bowser L."/>
            <person name="Brooks S.Y."/>
            <person name="Carninci P."/>
            <person name="Chao Q."/>
            <person name="Choy N."/>
            <person name="Enju A."/>
            <person name="Goldsmith A.D."/>
            <person name="Gurjal M."/>
            <person name="Hansen N.F."/>
            <person name="Hayashizaki Y."/>
            <person name="Johnson-Hopson C."/>
            <person name="Hsuan V.W."/>
            <person name="Iida K."/>
            <person name="Karnes M."/>
            <person name="Khan S."/>
            <person name="Koesema E."/>
            <person name="Ishida J."/>
            <person name="Jiang P.X."/>
            <person name="Jones T."/>
            <person name="Kawai J."/>
            <person name="Kamiya A."/>
            <person name="Meyers C."/>
            <person name="Nakajima M."/>
            <person name="Narusaka M."/>
            <person name="Seki M."/>
            <person name="Sakurai T."/>
            <person name="Satou M."/>
            <person name="Tamse R."/>
            <person name="Vaysberg M."/>
            <person name="Wallender E.K."/>
            <person name="Wong C."/>
            <person name="Yamamura Y."/>
            <person name="Yuan S."/>
            <person name="Shinozaki K."/>
            <person name="Davis R.W."/>
            <person name="Theologis A."/>
            <person name="Ecker J.R."/>
        </authorList>
    </citation>
    <scope>NUCLEOTIDE SEQUENCE [LARGE SCALE MRNA]</scope>
    <source>
        <strain>cv. Columbia</strain>
    </source>
</reference>
<reference key="5">
    <citation type="journal article" date="2002" name="Nucleic Acids Res.">
        <title>AtSWI3B, an Arabidopsis homolog of SWI3, a core subunit of yeast Swi/Snf chromatin remodeling complex, interacts with FCA, a regulator of flowering time.</title>
        <authorList>
            <person name="Sarnowski T.J."/>
            <person name="Swiezewski S."/>
            <person name="Pawlikowska K."/>
            <person name="Kaczanowski S."/>
            <person name="Jerzmanowski A."/>
        </authorList>
    </citation>
    <scope>FUNCTION</scope>
    <scope>INTERACTION WITH SWI3A; SWI3C; BSH AND FCA</scope>
    <scope>SUBUNIT</scope>
</reference>
<reference key="6">
    <citation type="journal article" date="2003" name="Plant Mol. Biol.">
        <title>CHB2, a member of the SWI3 gene family, is a global regulator in Arabidopsis.</title>
        <authorList>
            <person name="Zhou C."/>
            <person name="Miki B."/>
            <person name="Wu K."/>
        </authorList>
    </citation>
    <scope>FUNCTION</scope>
    <scope>TISSUE SPECIFICITY</scope>
</reference>
<reference key="7">
    <citation type="journal article" date="2006" name="Plant Mol. Biol.">
        <title>The putative SWI/SNF complex subunit BRAHMA activates flower homeotic genes in Arabidopsis thaliana.</title>
        <authorList>
            <person name="Hurtado L."/>
            <person name="Farrona S."/>
            <person name="Reyes J.C."/>
        </authorList>
    </citation>
    <scope>INTERACTION WITH BRM</scope>
</reference>
<reference key="8">
    <citation type="journal article" date="2008" name="Plant Cell">
        <title>HAB1-SWI3B interaction reveals a link between abscisic acid signaling and putative SWI/SNF chromatin-remodeling complexes in Arabidopsis.</title>
        <authorList>
            <person name="Saez A."/>
            <person name="Rodrigues A."/>
            <person name="Santiago J."/>
            <person name="Rubio S."/>
            <person name="Rodriguez P.L."/>
        </authorList>
    </citation>
    <scope>FUNCTION</scope>
    <scope>SUBCELLULAR LOCATION</scope>
    <scope>INTERACTION WITH HAB1</scope>
</reference>
<reference key="9">
    <citation type="journal article" date="2016" name="PLoS Genet.">
        <title>Two components of the RNA-Directed DNA methylation pathway associate with MORC6 and silence loci targeted by MORC6 in Arabidopsis.</title>
        <authorList>
            <person name="Liu Z.-W."/>
            <person name="Zhou J.-X."/>
            <person name="Huang H.-W."/>
            <person name="Li Y.-Q."/>
            <person name="Shao C.-R."/>
            <person name="Li L."/>
            <person name="Cai T."/>
            <person name="Chen S."/>
            <person name="He X.-J."/>
        </authorList>
    </citation>
    <scope>INTERACTION WITH MORC6 AND SUVH9</scope>
</reference>
<proteinExistence type="evidence at protein level"/>
<gene>
    <name type="primary">SWI3B</name>
    <name type="synonym">CHB2</name>
    <name type="ordered locus">At2g33610</name>
    <name type="ORF">F4P9.38</name>
</gene>
<sequence length="469" mass="52411">MAMKAPDPGGSGEILPSTPSLSETTSGGAAAASKSAQLPSSSSDIDNIHVPSYSSWFSWTDINDCEVRSLPEFFDSRSSSKNPKFYLYLRNSIIKQYRDDHPRKISFTDVRRTLVSDVVSIRRVFDFLDSWGLINYNSSASAKPLKWEEKEAGKSAGDAASEPATTVKETAKRNCNGCKAICSIACFACDKYDLTLCARCYVRSNYRVGINSSEFKRVEISEESKPEWSDKEILLLLEAVMHYGDDWKKVASHVIGRTEKDCVSQFVKLPFGEQFVKESDSEDGLEMFDQIKDSDIPESEGIDKDGSSPNKRIKLTPLADASNPIMAQAAFLSALAGTNVAEAAARAAVRALSDVDYEADKNASRDPNRQDANAASSGETTRNESERAWADAKSLIEKEEHEVEGAIKETVEVEMKKIRDRIVHFEKLDLEMERSRKQLEEVRNLLFVDQLNIFFHTRKARKTEDRIEC</sequence>
<keyword id="KW-0010">Activator</keyword>
<keyword id="KW-0156">Chromatin regulator</keyword>
<keyword id="KW-0175">Coiled coil</keyword>
<keyword id="KW-0217">Developmental protein</keyword>
<keyword id="KW-0238">DNA-binding</keyword>
<keyword id="KW-0539">Nucleus</keyword>
<keyword id="KW-1185">Reference proteome</keyword>
<keyword id="KW-0804">Transcription</keyword>
<keyword id="KW-0805">Transcription regulation</keyword>
<feature type="chain" id="PRO_0000344528" description="SWI/SNF complex subunit SWI3B">
    <location>
        <begin position="1"/>
        <end position="469"/>
    </location>
</feature>
<feature type="domain" description="SWIRM" evidence="2">
    <location>
        <begin position="48"/>
        <end position="145"/>
    </location>
</feature>
<feature type="domain" description="SANT" evidence="3">
    <location>
        <begin position="223"/>
        <end position="274"/>
    </location>
</feature>
<feature type="region of interest" description="Disordered" evidence="4">
    <location>
        <begin position="1"/>
        <end position="42"/>
    </location>
</feature>
<feature type="region of interest" description="Disordered" evidence="4">
    <location>
        <begin position="293"/>
        <end position="314"/>
    </location>
</feature>
<feature type="region of interest" description="Disordered" evidence="4">
    <location>
        <begin position="360"/>
        <end position="387"/>
    </location>
</feature>
<feature type="coiled-coil region" evidence="1">
    <location>
        <begin position="423"/>
        <end position="447"/>
    </location>
</feature>
<feature type="compositionally biased region" description="Low complexity" evidence="4">
    <location>
        <begin position="15"/>
        <end position="42"/>
    </location>
</feature>
<feature type="compositionally biased region" description="Basic and acidic residues" evidence="4">
    <location>
        <begin position="293"/>
        <end position="306"/>
    </location>
</feature>
<feature type="compositionally biased region" description="Basic and acidic residues" evidence="4">
    <location>
        <begin position="360"/>
        <end position="369"/>
    </location>
</feature>
<feature type="compositionally biased region" description="Polar residues" evidence="4">
    <location>
        <begin position="370"/>
        <end position="380"/>
    </location>
</feature>
<dbReference type="EMBL" id="AC002332">
    <property type="protein sequence ID" value="AAB80676.1"/>
    <property type="status" value="ALT_SEQ"/>
    <property type="molecule type" value="Genomic_DNA"/>
</dbReference>
<dbReference type="EMBL" id="CP002685">
    <property type="protein sequence ID" value="AEC08859.1"/>
    <property type="molecule type" value="Genomic_DNA"/>
</dbReference>
<dbReference type="EMBL" id="BT004085">
    <property type="protein sequence ID" value="AAO42112.1"/>
    <property type="molecule type" value="mRNA"/>
</dbReference>
<dbReference type="EMBL" id="BT005094">
    <property type="protein sequence ID" value="AAO50627.1"/>
    <property type="molecule type" value="mRNA"/>
</dbReference>
<dbReference type="PIR" id="F84747">
    <property type="entry name" value="F84747"/>
</dbReference>
<dbReference type="RefSeq" id="NP_180919.2">
    <property type="nucleotide sequence ID" value="NM_128921.6"/>
</dbReference>
<dbReference type="SMR" id="Q84JG2"/>
<dbReference type="BioGRID" id="3274">
    <property type="interactions" value="152"/>
</dbReference>
<dbReference type="ComplexPortal" id="CPX-7727">
    <property type="entry name" value="MINU1/2-associated SWI/SNF ATP-dependent chromatin remodeling complex"/>
</dbReference>
<dbReference type="FunCoup" id="Q84JG2">
    <property type="interactions" value="1633"/>
</dbReference>
<dbReference type="IntAct" id="Q84JG2">
    <property type="interactions" value="29"/>
</dbReference>
<dbReference type="STRING" id="3702.Q84JG2"/>
<dbReference type="iPTMnet" id="Q84JG2"/>
<dbReference type="PaxDb" id="3702-AT2G33610.1"/>
<dbReference type="ProteomicsDB" id="226798"/>
<dbReference type="EnsemblPlants" id="AT2G33610.1">
    <property type="protein sequence ID" value="AT2G33610.1"/>
    <property type="gene ID" value="AT2G33610"/>
</dbReference>
<dbReference type="GeneID" id="817927"/>
<dbReference type="Gramene" id="AT2G33610.1">
    <property type="protein sequence ID" value="AT2G33610.1"/>
    <property type="gene ID" value="AT2G33610"/>
</dbReference>
<dbReference type="KEGG" id="ath:AT2G33610"/>
<dbReference type="Araport" id="AT2G33610"/>
<dbReference type="TAIR" id="AT2G33610">
    <property type="gene designation" value="SWI3B"/>
</dbReference>
<dbReference type="eggNOG" id="KOG1279">
    <property type="taxonomic scope" value="Eukaryota"/>
</dbReference>
<dbReference type="HOGENOM" id="CLU_004447_5_0_1"/>
<dbReference type="InParanoid" id="Q84JG2"/>
<dbReference type="OMA" id="QQFNEME"/>
<dbReference type="OrthoDB" id="118550at2759"/>
<dbReference type="PhylomeDB" id="Q84JG2"/>
<dbReference type="PRO" id="PR:Q84JG2"/>
<dbReference type="Proteomes" id="UP000006548">
    <property type="component" value="Chromosome 2"/>
</dbReference>
<dbReference type="ExpressionAtlas" id="Q84JG2">
    <property type="expression patterns" value="baseline and differential"/>
</dbReference>
<dbReference type="GO" id="GO:0005634">
    <property type="term" value="C:nucleus"/>
    <property type="evidence" value="ECO:0000314"/>
    <property type="project" value="TAIR"/>
</dbReference>
<dbReference type="GO" id="GO:0016514">
    <property type="term" value="C:SWI/SNF complex"/>
    <property type="evidence" value="ECO:0000250"/>
    <property type="project" value="TAIR"/>
</dbReference>
<dbReference type="GO" id="GO:0003677">
    <property type="term" value="F:DNA binding"/>
    <property type="evidence" value="ECO:0007669"/>
    <property type="project" value="UniProtKB-KW"/>
</dbReference>
<dbReference type="GO" id="GO:0006338">
    <property type="term" value="P:chromatin remodeling"/>
    <property type="evidence" value="ECO:0000250"/>
    <property type="project" value="TAIR"/>
</dbReference>
<dbReference type="CDD" id="cd00167">
    <property type="entry name" value="SANT"/>
    <property type="match status" value="1"/>
</dbReference>
<dbReference type="FunFam" id="1.10.10.60:FF:000014">
    <property type="entry name" value="SWI/SNF complex subunit SMARCC2 isoform C"/>
    <property type="match status" value="1"/>
</dbReference>
<dbReference type="FunFam" id="1.10.10.10:FF:000020">
    <property type="entry name" value="SWI/SNF complex subunit SMARCC2 isoform c"/>
    <property type="match status" value="1"/>
</dbReference>
<dbReference type="Gene3D" id="1.10.10.60">
    <property type="entry name" value="Homeodomain-like"/>
    <property type="match status" value="1"/>
</dbReference>
<dbReference type="Gene3D" id="1.10.10.10">
    <property type="entry name" value="Winged helix-like DNA-binding domain superfamily/Winged helix DNA-binding domain"/>
    <property type="match status" value="1"/>
</dbReference>
<dbReference type="InterPro" id="IPR009057">
    <property type="entry name" value="Homeodomain-like_sf"/>
</dbReference>
<dbReference type="InterPro" id="IPR017930">
    <property type="entry name" value="Myb_dom"/>
</dbReference>
<dbReference type="InterPro" id="IPR001005">
    <property type="entry name" value="SANT/Myb"/>
</dbReference>
<dbReference type="InterPro" id="IPR017884">
    <property type="entry name" value="SANT_dom"/>
</dbReference>
<dbReference type="InterPro" id="IPR032451">
    <property type="entry name" value="SMARCC_C"/>
</dbReference>
<dbReference type="InterPro" id="IPR007526">
    <property type="entry name" value="SWIRM"/>
</dbReference>
<dbReference type="InterPro" id="IPR036388">
    <property type="entry name" value="WH-like_DNA-bd_sf"/>
</dbReference>
<dbReference type="PANTHER" id="PTHR12802">
    <property type="entry name" value="SWI/SNF COMPLEX-RELATED"/>
    <property type="match status" value="1"/>
</dbReference>
<dbReference type="PANTHER" id="PTHR12802:SF44">
    <property type="entry name" value="SWI_SNF COMPLEX SUBUNIT SWI3B"/>
    <property type="match status" value="1"/>
</dbReference>
<dbReference type="Pfam" id="PF00249">
    <property type="entry name" value="Myb_DNA-binding"/>
    <property type="match status" value="1"/>
</dbReference>
<dbReference type="Pfam" id="PF04433">
    <property type="entry name" value="SWIRM"/>
    <property type="match status" value="1"/>
</dbReference>
<dbReference type="Pfam" id="PF16495">
    <property type="entry name" value="SWIRM-assoc_1"/>
    <property type="match status" value="1"/>
</dbReference>
<dbReference type="SMART" id="SM00717">
    <property type="entry name" value="SANT"/>
    <property type="match status" value="1"/>
</dbReference>
<dbReference type="SUPFAM" id="SSF46689">
    <property type="entry name" value="Homeodomain-like"/>
    <property type="match status" value="2"/>
</dbReference>
<dbReference type="PROSITE" id="PS51293">
    <property type="entry name" value="SANT"/>
    <property type="match status" value="1"/>
</dbReference>
<dbReference type="PROSITE" id="PS50934">
    <property type="entry name" value="SWIRM"/>
    <property type="match status" value="1"/>
</dbReference>
<name>SWI3B_ARATH</name>
<organism>
    <name type="scientific">Arabidopsis thaliana</name>
    <name type="common">Mouse-ear cress</name>
    <dbReference type="NCBI Taxonomy" id="3702"/>
    <lineage>
        <taxon>Eukaryota</taxon>
        <taxon>Viridiplantae</taxon>
        <taxon>Streptophyta</taxon>
        <taxon>Embryophyta</taxon>
        <taxon>Tracheophyta</taxon>
        <taxon>Spermatophyta</taxon>
        <taxon>Magnoliopsida</taxon>
        <taxon>eudicotyledons</taxon>
        <taxon>Gunneridae</taxon>
        <taxon>Pentapetalae</taxon>
        <taxon>rosids</taxon>
        <taxon>malvids</taxon>
        <taxon>Brassicales</taxon>
        <taxon>Brassicaceae</taxon>
        <taxon>Camelineae</taxon>
        <taxon>Arabidopsis</taxon>
    </lineage>
</organism>